<sequence length="135" mass="14990">MKAFSPVRSVRKSSLTEHSLGIARSKAPVDEPMSLLYNMNDCYSKLKELVPSIPPNKKVSKMEILQHVIDYILDLQLTLDSHPTLVSLHHHHLSRVGGNTSRTPLTALNTDISILSLQAVELSSEFTDESKSLCP</sequence>
<reference evidence="4" key="1">
    <citation type="submission" date="2004-08" db="EMBL/GenBank/DDBJ databases">
        <authorList>
            <consortium name="NIH - Xenopus Gene Collection (XGC) project"/>
        </authorList>
    </citation>
    <scope>NUCLEOTIDE SEQUENCE [LARGE SCALE MRNA]</scope>
    <source>
        <tissue evidence="4">Gastrula</tissue>
    </source>
</reference>
<gene>
    <name type="primary">id2-b</name>
</gene>
<dbReference type="EMBL" id="BC081029">
    <property type="protein sequence ID" value="AAH81029.1"/>
    <property type="molecule type" value="mRNA"/>
</dbReference>
<dbReference type="RefSeq" id="NP_001087639.1">
    <property type="nucleotide sequence ID" value="NM_001094170.1"/>
</dbReference>
<dbReference type="SMR" id="Q66J78"/>
<dbReference type="DNASU" id="447463"/>
<dbReference type="GeneID" id="447463"/>
<dbReference type="KEGG" id="xla:447463"/>
<dbReference type="AGR" id="Xenbase:XB-GENE-17341008"/>
<dbReference type="CTD" id="447463"/>
<dbReference type="Xenbase" id="XB-GENE-17341008">
    <property type="gene designation" value="id2.S"/>
</dbReference>
<dbReference type="OrthoDB" id="10047910at2759"/>
<dbReference type="Proteomes" id="UP000186698">
    <property type="component" value="Chromosome 5S"/>
</dbReference>
<dbReference type="Bgee" id="447463">
    <property type="expression patterns" value="Expressed in blastula and 19 other cell types or tissues"/>
</dbReference>
<dbReference type="GO" id="GO:0005737">
    <property type="term" value="C:cytoplasm"/>
    <property type="evidence" value="ECO:0007669"/>
    <property type="project" value="UniProtKB-SubCell"/>
</dbReference>
<dbReference type="GO" id="GO:0005634">
    <property type="term" value="C:nucleus"/>
    <property type="evidence" value="ECO:0000250"/>
    <property type="project" value="UniProtKB"/>
</dbReference>
<dbReference type="GO" id="GO:0032991">
    <property type="term" value="C:protein-containing complex"/>
    <property type="evidence" value="ECO:0000250"/>
    <property type="project" value="UniProtKB"/>
</dbReference>
<dbReference type="GO" id="GO:0043425">
    <property type="term" value="F:bHLH transcription factor binding"/>
    <property type="evidence" value="ECO:0000250"/>
    <property type="project" value="UniProtKB"/>
</dbReference>
<dbReference type="GO" id="GO:0046983">
    <property type="term" value="F:protein dimerization activity"/>
    <property type="evidence" value="ECO:0007669"/>
    <property type="project" value="InterPro"/>
</dbReference>
<dbReference type="GO" id="GO:0003714">
    <property type="term" value="F:transcription corepressor activity"/>
    <property type="evidence" value="ECO:0000318"/>
    <property type="project" value="GO_Central"/>
</dbReference>
<dbReference type="GO" id="GO:0090398">
    <property type="term" value="P:cellular senescence"/>
    <property type="evidence" value="ECO:0000250"/>
    <property type="project" value="UniProtKB"/>
</dbReference>
<dbReference type="GO" id="GO:0032922">
    <property type="term" value="P:circadian regulation of gene expression"/>
    <property type="evidence" value="ECO:0007669"/>
    <property type="project" value="TreeGrafter"/>
</dbReference>
<dbReference type="GO" id="GO:0048557">
    <property type="term" value="P:embryonic digestive tract morphogenesis"/>
    <property type="evidence" value="ECO:0000250"/>
    <property type="project" value="UniProtKB"/>
</dbReference>
<dbReference type="GO" id="GO:0061031">
    <property type="term" value="P:endodermal digestive tract morphogenesis"/>
    <property type="evidence" value="ECO:0000250"/>
    <property type="project" value="UniProtKB"/>
</dbReference>
<dbReference type="GO" id="GO:0010629">
    <property type="term" value="P:negative regulation of gene expression"/>
    <property type="evidence" value="ECO:0000250"/>
    <property type="project" value="UniProtKB"/>
</dbReference>
<dbReference type="GO" id="GO:0000122">
    <property type="term" value="P:negative regulation of transcription by RNA polymerase II"/>
    <property type="evidence" value="ECO:0000250"/>
    <property type="project" value="UniProtKB"/>
</dbReference>
<dbReference type="GO" id="GO:0030182">
    <property type="term" value="P:neuron differentiation"/>
    <property type="evidence" value="ECO:0000318"/>
    <property type="project" value="GO_Central"/>
</dbReference>
<dbReference type="GO" id="GO:0048663">
    <property type="term" value="P:neuron fate commitment"/>
    <property type="evidence" value="ECO:0000250"/>
    <property type="project" value="UniProtKB"/>
</dbReference>
<dbReference type="GO" id="GO:0045777">
    <property type="term" value="P:positive regulation of blood pressure"/>
    <property type="evidence" value="ECO:0000250"/>
    <property type="project" value="UniProtKB"/>
</dbReference>
<dbReference type="GO" id="GO:0045893">
    <property type="term" value="P:positive regulation of DNA-templated transcription"/>
    <property type="evidence" value="ECO:0000250"/>
    <property type="project" value="UniProtKB"/>
</dbReference>
<dbReference type="GO" id="GO:0010628">
    <property type="term" value="P:positive regulation of gene expression"/>
    <property type="evidence" value="ECO:0000250"/>
    <property type="project" value="UniProtKB"/>
</dbReference>
<dbReference type="GO" id="GO:0048661">
    <property type="term" value="P:positive regulation of smooth muscle cell proliferation"/>
    <property type="evidence" value="ECO:0000250"/>
    <property type="project" value="UniProtKB"/>
</dbReference>
<dbReference type="GO" id="GO:0042752">
    <property type="term" value="P:regulation of circadian rhythm"/>
    <property type="evidence" value="ECO:0000250"/>
    <property type="project" value="UniProtKB"/>
</dbReference>
<dbReference type="GO" id="GO:0010468">
    <property type="term" value="P:regulation of gene expression"/>
    <property type="evidence" value="ECO:0000250"/>
    <property type="project" value="UniProtKB"/>
</dbReference>
<dbReference type="GO" id="GO:2000177">
    <property type="term" value="P:regulation of neural precursor cell proliferation"/>
    <property type="evidence" value="ECO:0000250"/>
    <property type="project" value="UniProtKB"/>
</dbReference>
<dbReference type="GO" id="GO:0045664">
    <property type="term" value="P:regulation of neuron differentiation"/>
    <property type="evidence" value="ECO:0000250"/>
    <property type="project" value="UniProtKB"/>
</dbReference>
<dbReference type="FunFam" id="4.10.280.10:FF:000055">
    <property type="entry name" value="DNA-binding protein inhibitor ID-2"/>
    <property type="match status" value="1"/>
</dbReference>
<dbReference type="Gene3D" id="4.10.280.10">
    <property type="entry name" value="Helix-loop-helix DNA-binding domain"/>
    <property type="match status" value="1"/>
</dbReference>
<dbReference type="InterPro" id="IPR011598">
    <property type="entry name" value="bHLH_dom"/>
</dbReference>
<dbReference type="InterPro" id="IPR026052">
    <property type="entry name" value="DNA-bd_prot-inh"/>
</dbReference>
<dbReference type="InterPro" id="IPR036638">
    <property type="entry name" value="HLH_DNA-bd_sf"/>
</dbReference>
<dbReference type="PANTHER" id="PTHR11723">
    <property type="entry name" value="DNA-BINDING PROTEIN INHIBITOR"/>
    <property type="match status" value="1"/>
</dbReference>
<dbReference type="PANTHER" id="PTHR11723:SF5">
    <property type="entry name" value="DNA-BINDING PROTEIN INHIBITOR ID-2"/>
    <property type="match status" value="1"/>
</dbReference>
<dbReference type="Pfam" id="PF00010">
    <property type="entry name" value="HLH"/>
    <property type="match status" value="1"/>
</dbReference>
<dbReference type="SMART" id="SM00353">
    <property type="entry name" value="HLH"/>
    <property type="match status" value="1"/>
</dbReference>
<dbReference type="SUPFAM" id="SSF47459">
    <property type="entry name" value="HLH, helix-loop-helix DNA-binding domain"/>
    <property type="match status" value="1"/>
</dbReference>
<dbReference type="PROSITE" id="PS50888">
    <property type="entry name" value="BHLH"/>
    <property type="match status" value="1"/>
</dbReference>
<name>ID2B_XENLA</name>
<evidence type="ECO:0000250" key="1"/>
<evidence type="ECO:0000250" key="2">
    <source>
        <dbReference type="UniProtKB" id="Q02363"/>
    </source>
</evidence>
<evidence type="ECO:0000255" key="3">
    <source>
        <dbReference type="PROSITE-ProRule" id="PRU00981"/>
    </source>
</evidence>
<evidence type="ECO:0000312" key="4">
    <source>
        <dbReference type="EMBL" id="AAH81029.1"/>
    </source>
</evidence>
<protein>
    <recommendedName>
        <fullName>DNA-binding protein inhibitor ID-2-B</fullName>
    </recommendedName>
    <alternativeName>
        <fullName>Inhibitor of DNA binding 2-B</fullName>
    </alternativeName>
    <alternativeName>
        <fullName>Inhibitor of differentiation 2-B</fullName>
    </alternativeName>
</protein>
<comment type="function">
    <text evidence="1">Transcriptional regulator (lacking a basic DNA binding domain) which negatively regulates the basic helix-loop-helix (bHLH) transcription factors by forming heterodimers and inhibiting their DNA binding and transcriptional activity. Inhibits the activity of both neurogenic (neurod1/neuroD) and myogenic (myod1/myoD) bHLH factors. May play a role in the regulation of the circadian clock (By similarity).</text>
</comment>
<comment type="subunit">
    <text evidence="2">Heterodimer with other HLH proteins.</text>
</comment>
<comment type="subcellular location">
    <subcellularLocation>
        <location>Cytoplasm</location>
    </subcellularLocation>
    <subcellularLocation>
        <location evidence="2 3">Nucleus</location>
    </subcellularLocation>
</comment>
<keyword id="KW-0090">Biological rhythms</keyword>
<keyword id="KW-0963">Cytoplasm</keyword>
<keyword id="KW-0217">Developmental protein</keyword>
<keyword id="KW-0539">Nucleus</keyword>
<keyword id="KW-1185">Reference proteome</keyword>
<keyword id="KW-0678">Repressor</keyword>
<keyword id="KW-0804">Transcription</keyword>
<keyword id="KW-0805">Transcription regulation</keyword>
<proteinExistence type="evidence at transcript level"/>
<organism>
    <name type="scientific">Xenopus laevis</name>
    <name type="common">African clawed frog</name>
    <dbReference type="NCBI Taxonomy" id="8355"/>
    <lineage>
        <taxon>Eukaryota</taxon>
        <taxon>Metazoa</taxon>
        <taxon>Chordata</taxon>
        <taxon>Craniata</taxon>
        <taxon>Vertebrata</taxon>
        <taxon>Euteleostomi</taxon>
        <taxon>Amphibia</taxon>
        <taxon>Batrachia</taxon>
        <taxon>Anura</taxon>
        <taxon>Pipoidea</taxon>
        <taxon>Pipidae</taxon>
        <taxon>Xenopodinae</taxon>
        <taxon>Xenopus</taxon>
        <taxon>Xenopus</taxon>
    </lineage>
</organism>
<accession>Q66J78</accession>
<feature type="chain" id="PRO_0000390722" description="DNA-binding protein inhibitor ID-2-B">
    <location>
        <begin position="1"/>
        <end position="135"/>
    </location>
</feature>
<feature type="domain" description="bHLH" evidence="3">
    <location>
        <begin position="23"/>
        <end position="75"/>
    </location>
</feature>
<feature type="short sequence motif" description="Nuclear export signal" evidence="1">
    <location>
        <begin position="108"/>
        <end position="117"/>
    </location>
</feature>